<keyword id="KW-0426">Late protein</keyword>
<protein>
    <recommendedName>
        <fullName>Uncharacterized protein B125R</fullName>
        <shortName>pB125R</shortName>
    </recommendedName>
</protein>
<proteinExistence type="inferred from homology"/>
<sequence>MAVYAKDLDNNKELNQKLINDQLKIIDTLLLAEKKNFLVYELPAPFDFSSGDPLASQRDIYYAIIKSLEERGFTVKICMKGDRALLFITWKKIQSIEINKKEEYLRMHFIQDEEKAFYCKFLESR</sequence>
<organism>
    <name type="scientific">African swine fever virus (isolate Tick/South Africa/Pretoriuskop Pr4/1996)</name>
    <name type="common">ASFV</name>
    <dbReference type="NCBI Taxonomy" id="561443"/>
    <lineage>
        <taxon>Viruses</taxon>
        <taxon>Varidnaviria</taxon>
        <taxon>Bamfordvirae</taxon>
        <taxon>Nucleocytoviricota</taxon>
        <taxon>Pokkesviricetes</taxon>
        <taxon>Asfuvirales</taxon>
        <taxon>Asfarviridae</taxon>
        <taxon>Asfivirus</taxon>
        <taxon>African swine fever virus</taxon>
    </lineage>
</organism>
<name>VF125_ASFP4</name>
<comment type="induction">
    <text evidence="1">Expressed in the late phase of the viral replicative cycle.</text>
</comment>
<comment type="similarity">
    <text evidence="1">Belongs to the asfivirus B125R family.</text>
</comment>
<accession>P0CA34</accession>
<organismHost>
    <name type="scientific">Ornithodoros</name>
    <name type="common">relapsing fever ticks</name>
    <dbReference type="NCBI Taxonomy" id="6937"/>
</organismHost>
<organismHost>
    <name type="scientific">Phacochoerus aethiopicus</name>
    <name type="common">Warthog</name>
    <dbReference type="NCBI Taxonomy" id="85517"/>
</organismHost>
<organismHost>
    <name type="scientific">Phacochoerus africanus</name>
    <name type="common">Warthog</name>
    <dbReference type="NCBI Taxonomy" id="41426"/>
</organismHost>
<organismHost>
    <name type="scientific">Potamochoerus larvatus</name>
    <name type="common">Bushpig</name>
    <dbReference type="NCBI Taxonomy" id="273792"/>
</organismHost>
<organismHost>
    <name type="scientific">Sus scrofa</name>
    <name type="common">Pig</name>
    <dbReference type="NCBI Taxonomy" id="9823"/>
</organismHost>
<feature type="chain" id="PRO_0000373503" description="Uncharacterized protein B125R">
    <location>
        <begin position="1"/>
        <end position="125"/>
    </location>
</feature>
<gene>
    <name type="ordered locus">Pret-094</name>
</gene>
<reference key="1">
    <citation type="submission" date="2003-03" db="EMBL/GenBank/DDBJ databases">
        <title>African swine fever virus genomes.</title>
        <authorList>
            <person name="Kutish G.F."/>
            <person name="Rock D.L."/>
        </authorList>
    </citation>
    <scope>NUCLEOTIDE SEQUENCE [LARGE SCALE GENOMIC DNA]</scope>
</reference>
<evidence type="ECO:0000305" key="1"/>
<dbReference type="EMBL" id="AY261363">
    <property type="status" value="NOT_ANNOTATED_CDS"/>
    <property type="molecule type" value="Genomic_DNA"/>
</dbReference>
<dbReference type="Proteomes" id="UP000000859">
    <property type="component" value="Segment"/>
</dbReference>